<reference key="1">
    <citation type="journal article" date="1992" name="Mol. Microbiol.">
        <title>Homologous catalytic domains in a rumen fungal xylanase: evidence for gene duplication and prokaryotic origin.</title>
        <authorList>
            <person name="Gilbert H.J."/>
            <person name="Hazlewood G.P."/>
            <person name="Laurie J.I."/>
            <person name="Orpin C.G."/>
            <person name="Xue G.P."/>
        </authorList>
    </citation>
    <scope>NUCLEOTIDE SEQUENCE [MRNA]</scope>
</reference>
<keyword id="KW-0002">3D-structure</keyword>
<keyword id="KW-0119">Carbohydrate metabolism</keyword>
<keyword id="KW-0326">Glycosidase</keyword>
<keyword id="KW-0378">Hydrolase</keyword>
<keyword id="KW-0511">Multifunctional enzyme</keyword>
<keyword id="KW-0624">Polysaccharide degradation</keyword>
<keyword id="KW-0677">Repeat</keyword>
<keyword id="KW-0732">Signal</keyword>
<keyword id="KW-0858">Xylan degradation</keyword>
<dbReference type="EC" id="3.2.1.8"/>
<dbReference type="EMBL" id="X65526">
    <property type="protein sequence ID" value="CAA46498.1"/>
    <property type="molecule type" value="mRNA"/>
</dbReference>
<dbReference type="PIR" id="S24754">
    <property type="entry name" value="S24754"/>
</dbReference>
<dbReference type="PDB" id="2C1F">
    <property type="method" value="X-ray"/>
    <property type="resolution" value="2.10 A"/>
    <property type="chains" value="A=275-499"/>
</dbReference>
<dbReference type="PDB" id="2VG9">
    <property type="method" value="X-ray"/>
    <property type="resolution" value="2.00 A"/>
    <property type="chains" value="A=275-492"/>
</dbReference>
<dbReference type="PDBsum" id="2C1F"/>
<dbReference type="PDBsum" id="2VG9"/>
<dbReference type="SMR" id="P29127"/>
<dbReference type="CAZy" id="GH11">
    <property type="family name" value="Glycoside Hydrolase Family 11"/>
</dbReference>
<dbReference type="BRENDA" id="3.2.1.8">
    <property type="organism ID" value="6834"/>
</dbReference>
<dbReference type="UniPathway" id="UPA00114"/>
<dbReference type="EvolutionaryTrace" id="P29127"/>
<dbReference type="GO" id="GO:0031176">
    <property type="term" value="F:endo-1,4-beta-xylanase activity"/>
    <property type="evidence" value="ECO:0007669"/>
    <property type="project" value="UniProtKB-EC"/>
</dbReference>
<dbReference type="GO" id="GO:0045493">
    <property type="term" value="P:xylan catabolic process"/>
    <property type="evidence" value="ECO:0007669"/>
    <property type="project" value="UniProtKB-UniPathway"/>
</dbReference>
<dbReference type="Gene3D" id="2.60.120.180">
    <property type="match status" value="2"/>
</dbReference>
<dbReference type="Gene3D" id="3.90.1220.10">
    <property type="entry name" value="Cellulose docking domain, dockering"/>
    <property type="match status" value="2"/>
</dbReference>
<dbReference type="InterPro" id="IPR002883">
    <property type="entry name" value="CBM10/Dockerin_dom"/>
</dbReference>
<dbReference type="InterPro" id="IPR013320">
    <property type="entry name" value="ConA-like_dom_sf"/>
</dbReference>
<dbReference type="InterPro" id="IPR009034">
    <property type="entry name" value="Dockerin_dom_fun_sf"/>
</dbReference>
<dbReference type="InterPro" id="IPR013319">
    <property type="entry name" value="GH11/12"/>
</dbReference>
<dbReference type="InterPro" id="IPR018208">
    <property type="entry name" value="GH11_AS_1"/>
</dbReference>
<dbReference type="InterPro" id="IPR033119">
    <property type="entry name" value="GH11_AS_2"/>
</dbReference>
<dbReference type="InterPro" id="IPR033123">
    <property type="entry name" value="GH11_dom"/>
</dbReference>
<dbReference type="InterPro" id="IPR001137">
    <property type="entry name" value="Glyco_hydro_11"/>
</dbReference>
<dbReference type="PANTHER" id="PTHR46828">
    <property type="entry name" value="ENDO-1,4-BETA-XYLANASE A-RELATED"/>
    <property type="match status" value="1"/>
</dbReference>
<dbReference type="PANTHER" id="PTHR46828:SF2">
    <property type="entry name" value="ENDO-1,4-BETA-XYLANASE A-RELATED"/>
    <property type="match status" value="1"/>
</dbReference>
<dbReference type="Pfam" id="PF02013">
    <property type="entry name" value="CBM_10"/>
    <property type="match status" value="2"/>
</dbReference>
<dbReference type="Pfam" id="PF00457">
    <property type="entry name" value="Glyco_hydro_11"/>
    <property type="match status" value="2"/>
</dbReference>
<dbReference type="PRINTS" id="PR00911">
    <property type="entry name" value="GLHYDRLASE11"/>
</dbReference>
<dbReference type="SUPFAM" id="SSF64571">
    <property type="entry name" value="Cellulose docking domain, dockering"/>
    <property type="match status" value="2"/>
</dbReference>
<dbReference type="SUPFAM" id="SSF49899">
    <property type="entry name" value="Concanavalin A-like lectins/glucanases"/>
    <property type="match status" value="2"/>
</dbReference>
<dbReference type="PROSITE" id="PS51763">
    <property type="entry name" value="CBM10"/>
    <property type="match status" value="2"/>
</dbReference>
<dbReference type="PROSITE" id="PS00776">
    <property type="entry name" value="GH11_1"/>
    <property type="match status" value="2"/>
</dbReference>
<dbReference type="PROSITE" id="PS00777">
    <property type="entry name" value="GH11_2"/>
    <property type="match status" value="2"/>
</dbReference>
<dbReference type="PROSITE" id="PS51761">
    <property type="entry name" value="GH11_3"/>
    <property type="match status" value="2"/>
</dbReference>
<protein>
    <recommendedName>
        <fullName>Bifunctional endo-1,4-beta-xylanase A</fullName>
        <shortName>XYLA</shortName>
        <ecNumber>3.2.1.8</ecNumber>
    </recommendedName>
</protein>
<feature type="signal peptide" evidence="1">
    <location>
        <begin position="1"/>
        <end position="18"/>
    </location>
</feature>
<feature type="chain" id="PRO_0000008016" description="Bifunctional endo-1,4-beta-xylanase A">
    <location>
        <begin position="19"/>
        <end position="607"/>
    </location>
</feature>
<feature type="domain" description="GH11 1" evidence="2">
    <location>
        <begin position="35"/>
        <end position="242"/>
    </location>
</feature>
<feature type="domain" description="GH11 2" evidence="2">
    <location>
        <begin position="280"/>
        <end position="487"/>
    </location>
</feature>
<feature type="domain" description="CBM10 1" evidence="3">
    <location>
        <begin position="523"/>
        <end position="563"/>
    </location>
</feature>
<feature type="domain" description="CBM10 2" evidence="3">
    <location>
        <begin position="566"/>
        <end position="606"/>
    </location>
</feature>
<feature type="region of interest" description="Disordered" evidence="6">
    <location>
        <begin position="248"/>
        <end position="284"/>
    </location>
</feature>
<feature type="region of interest" description="Disordered" evidence="6">
    <location>
        <begin position="493"/>
        <end position="514"/>
    </location>
</feature>
<feature type="compositionally biased region" description="Polar residues" evidence="6">
    <location>
        <begin position="248"/>
        <end position="272"/>
    </location>
</feature>
<feature type="compositionally biased region" description="Low complexity" evidence="6">
    <location>
        <begin position="496"/>
        <end position="514"/>
    </location>
</feature>
<feature type="active site" description="Nucleophile" evidence="4">
    <location>
        <position position="141"/>
    </location>
</feature>
<feature type="active site" description="Proton donor" evidence="5">
    <location>
        <position position="223"/>
    </location>
</feature>
<feature type="active site" description="Nucleophile" evidence="4">
    <location>
        <position position="386"/>
    </location>
</feature>
<feature type="active site" description="Proton donor" evidence="5">
    <location>
        <position position="474"/>
    </location>
</feature>
<feature type="strand" evidence="8">
    <location>
        <begin position="275"/>
        <end position="281"/>
    </location>
</feature>
<feature type="strand" evidence="8">
    <location>
        <begin position="283"/>
        <end position="289"/>
    </location>
</feature>
<feature type="strand" evidence="8">
    <location>
        <begin position="292"/>
        <end position="299"/>
    </location>
</feature>
<feature type="strand" evidence="8">
    <location>
        <begin position="304"/>
        <end position="309"/>
    </location>
</feature>
<feature type="strand" evidence="8">
    <location>
        <begin position="315"/>
        <end position="320"/>
    </location>
</feature>
<feature type="strand" evidence="8">
    <location>
        <begin position="327"/>
        <end position="335"/>
    </location>
</feature>
<feature type="helix" evidence="8">
    <location>
        <begin position="342"/>
        <end position="344"/>
    </location>
</feature>
<feature type="strand" evidence="8">
    <location>
        <begin position="345"/>
        <end position="375"/>
    </location>
</feature>
<feature type="strand" evidence="8">
    <location>
        <begin position="385"/>
        <end position="395"/>
    </location>
</feature>
<feature type="strand" evidence="8">
    <location>
        <begin position="403"/>
        <end position="407"/>
    </location>
</feature>
<feature type="strand" evidence="8">
    <location>
        <begin position="410"/>
        <end position="423"/>
    </location>
</feature>
<feature type="strand" evidence="8">
    <location>
        <begin position="426"/>
        <end position="440"/>
    </location>
</feature>
<feature type="strand" evidence="8">
    <location>
        <begin position="443"/>
        <end position="448"/>
    </location>
</feature>
<feature type="helix" evidence="8">
    <location>
        <begin position="449"/>
        <end position="457"/>
    </location>
</feature>
<feature type="turn" evidence="8">
    <location>
        <begin position="458"/>
        <end position="460"/>
    </location>
</feature>
<feature type="strand" evidence="8">
    <location>
        <begin position="468"/>
        <end position="492"/>
    </location>
</feature>
<organism>
    <name type="scientific">Neocallimastix patriciarum</name>
    <name type="common">Rumen fungus</name>
    <dbReference type="NCBI Taxonomy" id="4758"/>
    <lineage>
        <taxon>Eukaryota</taxon>
        <taxon>Fungi</taxon>
        <taxon>Fungi incertae sedis</taxon>
        <taxon>Chytridiomycota</taxon>
        <taxon>Chytridiomycota incertae sedis</taxon>
        <taxon>Neocallimastigomycetes</taxon>
        <taxon>Neocallimastigales</taxon>
        <taxon>Neocallimastigaceae</taxon>
        <taxon>Neocallimastix</taxon>
    </lineage>
</organism>
<sequence>MRTIKFFFAVAIATVAKAQWGGGGASAGQRLTVGNGQTQHKGVADGYSYEIWLDNTGGSGSMTLGSGATFKAEWNASVNRGNFLARRGLDFGSQKKATDYSYIGLDYTATYRQTGSASGNSRLCVYGWFQNRGVQGVPLVEYYIIEDWVDWVSDAQGRMVTIDGAQYKIFQMDHTGPTINGGSETFKQYFSVRQQKRTSGHITVSDHFKEWAKQGWGIGNLYEVALNAEGWQSSGIADVTKLDVYTTQKGSNPAPTSTGTVPSSSAGGSTANGKKFTVGNGQNQHKGVNDGFSYEIWLDNTGGNGSMTLGSGATFKAEWNAAVNRGNFLARRGLDFGSQKKATDYDYIGLDYAATYKQTASASGNSRLCVYGWFQNRGLNGVPLVEYYIIEDWVDWVPDAQGKMVTIDGAQYKIFQMDHTGPTINGGSETFKQYFSVRQQKRTSGHITVSDHFKEWAKQGWGIGNLYEVALNAEGWQSSGVADVTLLDVYTTPKGSSPATSAAPRTTTRTTTRTKSLPTNYNKCSARITAQGYKCCSDPNCVVYYTDEDGTWGVENNDWCGCGVEQCSSKITSQGYKCCSDPNCVVFYTDDDGKWGVENNDWCGCGF</sequence>
<proteinExistence type="evidence at protein level"/>
<name>XYNA_NEOPA</name>
<comment type="function">
    <text>Hydrolyzes xylans into xylobiose and xylose.</text>
</comment>
<comment type="catalytic activity">
    <reaction>
        <text>Endohydrolysis of (1-&gt;4)-beta-D-xylosidic linkages in xylans.</text>
        <dbReference type="EC" id="3.2.1.8"/>
    </reaction>
</comment>
<comment type="pathway">
    <text>Glycan degradation; xylan degradation.</text>
</comment>
<comment type="similarity">
    <text evidence="7">Belongs to the glycosyl hydrolase 11 (cellulase G) family.</text>
</comment>
<accession>P29127</accession>
<evidence type="ECO:0000255" key="1"/>
<evidence type="ECO:0000255" key="2">
    <source>
        <dbReference type="PROSITE-ProRule" id="PRU01097"/>
    </source>
</evidence>
<evidence type="ECO:0000255" key="3">
    <source>
        <dbReference type="PROSITE-ProRule" id="PRU01099"/>
    </source>
</evidence>
<evidence type="ECO:0000255" key="4">
    <source>
        <dbReference type="PROSITE-ProRule" id="PRU10062"/>
    </source>
</evidence>
<evidence type="ECO:0000255" key="5">
    <source>
        <dbReference type="PROSITE-ProRule" id="PRU10063"/>
    </source>
</evidence>
<evidence type="ECO:0000256" key="6">
    <source>
        <dbReference type="SAM" id="MobiDB-lite"/>
    </source>
</evidence>
<evidence type="ECO:0000305" key="7"/>
<evidence type="ECO:0007829" key="8">
    <source>
        <dbReference type="PDB" id="2VG9"/>
    </source>
</evidence>
<gene>
    <name type="primary">XYNA</name>
</gene>